<sequence length="102" mass="11068">MTIPLYEVLILASILFAMGLACVVAWRANVIMMLIGIEIMLNAVMLTFVGGSAHWGIAEGQVFSLMIMALTSAEVSLALAMVAYLHRRKQSVDTDDFSSMKG</sequence>
<protein>
    <recommendedName>
        <fullName evidence="1">NADH-quinone oxidoreductase subunit K 1</fullName>
        <ecNumber evidence="1">7.1.1.-</ecNumber>
    </recommendedName>
    <alternativeName>
        <fullName evidence="1">NADH dehydrogenase I subunit K 1</fullName>
    </alternativeName>
    <alternativeName>
        <fullName evidence="1">NDH-1 subunit K 1</fullName>
    </alternativeName>
</protein>
<feature type="chain" id="PRO_5000394064" description="NADH-quinone oxidoreductase subunit K 1">
    <location>
        <begin position="1"/>
        <end position="102"/>
    </location>
</feature>
<feature type="transmembrane region" description="Helical" evidence="1">
    <location>
        <begin position="5"/>
        <end position="25"/>
    </location>
</feature>
<feature type="transmembrane region" description="Helical" evidence="1">
    <location>
        <begin position="30"/>
        <end position="50"/>
    </location>
</feature>
<feature type="transmembrane region" description="Helical" evidence="1">
    <location>
        <begin position="62"/>
        <end position="82"/>
    </location>
</feature>
<name>NUOK1_CITBB</name>
<accession>B5E964</accession>
<comment type="function">
    <text evidence="1">NDH-1 shuttles electrons from NADH, via FMN and iron-sulfur (Fe-S) centers, to quinones in the respiratory chain. The immediate electron acceptor for the enzyme in this species is believed to be ubiquinone. Couples the redox reaction to proton translocation (for every two electrons transferred, four hydrogen ions are translocated across the cytoplasmic membrane), and thus conserves the redox energy in a proton gradient.</text>
</comment>
<comment type="catalytic activity">
    <reaction evidence="1">
        <text>a quinone + NADH + 5 H(+)(in) = a quinol + NAD(+) + 4 H(+)(out)</text>
        <dbReference type="Rhea" id="RHEA:57888"/>
        <dbReference type="ChEBI" id="CHEBI:15378"/>
        <dbReference type="ChEBI" id="CHEBI:24646"/>
        <dbReference type="ChEBI" id="CHEBI:57540"/>
        <dbReference type="ChEBI" id="CHEBI:57945"/>
        <dbReference type="ChEBI" id="CHEBI:132124"/>
    </reaction>
</comment>
<comment type="subunit">
    <text evidence="1">NDH-1 is composed of 14 different subunits. Subunits NuoA, H, J, K, L, M, N constitute the membrane sector of the complex.</text>
</comment>
<comment type="subcellular location">
    <subcellularLocation>
        <location evidence="1">Cell inner membrane</location>
        <topology evidence="1">Multi-pass membrane protein</topology>
    </subcellularLocation>
</comment>
<comment type="similarity">
    <text evidence="1">Belongs to the complex I subunit 4L family.</text>
</comment>
<gene>
    <name evidence="1" type="primary">nuoK1</name>
    <name type="ordered locus">Gbem_0170</name>
</gene>
<keyword id="KW-0997">Cell inner membrane</keyword>
<keyword id="KW-1003">Cell membrane</keyword>
<keyword id="KW-0472">Membrane</keyword>
<keyword id="KW-0520">NAD</keyword>
<keyword id="KW-0874">Quinone</keyword>
<keyword id="KW-1185">Reference proteome</keyword>
<keyword id="KW-1278">Translocase</keyword>
<keyword id="KW-0812">Transmembrane</keyword>
<keyword id="KW-1133">Transmembrane helix</keyword>
<keyword id="KW-0813">Transport</keyword>
<keyword id="KW-0830">Ubiquinone</keyword>
<dbReference type="EC" id="7.1.1.-" evidence="1"/>
<dbReference type="EMBL" id="CP001124">
    <property type="protein sequence ID" value="ACH37201.1"/>
    <property type="molecule type" value="Genomic_DNA"/>
</dbReference>
<dbReference type="SMR" id="B5E964"/>
<dbReference type="STRING" id="404380.Gbem_0170"/>
<dbReference type="KEGG" id="gbm:Gbem_0170"/>
<dbReference type="eggNOG" id="COG0713">
    <property type="taxonomic scope" value="Bacteria"/>
</dbReference>
<dbReference type="HOGENOM" id="CLU_144724_0_1_7"/>
<dbReference type="OrthoDB" id="9810120at2"/>
<dbReference type="Proteomes" id="UP000008825">
    <property type="component" value="Chromosome"/>
</dbReference>
<dbReference type="GO" id="GO:0030964">
    <property type="term" value="C:NADH dehydrogenase complex"/>
    <property type="evidence" value="ECO:0007669"/>
    <property type="project" value="TreeGrafter"/>
</dbReference>
<dbReference type="GO" id="GO:0005886">
    <property type="term" value="C:plasma membrane"/>
    <property type="evidence" value="ECO:0007669"/>
    <property type="project" value="UniProtKB-SubCell"/>
</dbReference>
<dbReference type="GO" id="GO:0050136">
    <property type="term" value="F:NADH:ubiquinone reductase (non-electrogenic) activity"/>
    <property type="evidence" value="ECO:0007669"/>
    <property type="project" value="UniProtKB-UniRule"/>
</dbReference>
<dbReference type="GO" id="GO:0048038">
    <property type="term" value="F:quinone binding"/>
    <property type="evidence" value="ECO:0007669"/>
    <property type="project" value="UniProtKB-KW"/>
</dbReference>
<dbReference type="GO" id="GO:0042773">
    <property type="term" value="P:ATP synthesis coupled electron transport"/>
    <property type="evidence" value="ECO:0007669"/>
    <property type="project" value="InterPro"/>
</dbReference>
<dbReference type="FunFam" id="1.10.287.3510:FF:000001">
    <property type="entry name" value="NADH-quinone oxidoreductase subunit K"/>
    <property type="match status" value="1"/>
</dbReference>
<dbReference type="Gene3D" id="1.10.287.3510">
    <property type="match status" value="1"/>
</dbReference>
<dbReference type="HAMAP" id="MF_01456">
    <property type="entry name" value="NDH1_NuoK"/>
    <property type="match status" value="1"/>
</dbReference>
<dbReference type="InterPro" id="IPR001133">
    <property type="entry name" value="NADH_UbQ_OxRdtase_chain4L/K"/>
</dbReference>
<dbReference type="InterPro" id="IPR039428">
    <property type="entry name" value="NUOK/Mnh_C1-like"/>
</dbReference>
<dbReference type="NCBIfam" id="NF004320">
    <property type="entry name" value="PRK05715.1-2"/>
    <property type="match status" value="1"/>
</dbReference>
<dbReference type="PANTHER" id="PTHR11434:SF16">
    <property type="entry name" value="NADH-UBIQUINONE OXIDOREDUCTASE CHAIN 4L"/>
    <property type="match status" value="1"/>
</dbReference>
<dbReference type="PANTHER" id="PTHR11434">
    <property type="entry name" value="NADH-UBIQUINONE OXIDOREDUCTASE SUBUNIT ND4L"/>
    <property type="match status" value="1"/>
</dbReference>
<dbReference type="Pfam" id="PF00420">
    <property type="entry name" value="Oxidored_q2"/>
    <property type="match status" value="1"/>
</dbReference>
<evidence type="ECO:0000255" key="1">
    <source>
        <dbReference type="HAMAP-Rule" id="MF_01456"/>
    </source>
</evidence>
<organism>
    <name type="scientific">Citrifermentans bemidjiense (strain ATCC BAA-1014 / DSM 16622 / JCM 12645 / Bem)</name>
    <name type="common">Geobacter bemidjiensis</name>
    <dbReference type="NCBI Taxonomy" id="404380"/>
    <lineage>
        <taxon>Bacteria</taxon>
        <taxon>Pseudomonadati</taxon>
        <taxon>Thermodesulfobacteriota</taxon>
        <taxon>Desulfuromonadia</taxon>
        <taxon>Geobacterales</taxon>
        <taxon>Geobacteraceae</taxon>
        <taxon>Citrifermentans</taxon>
    </lineage>
</organism>
<reference key="1">
    <citation type="submission" date="2008-07" db="EMBL/GenBank/DDBJ databases">
        <title>Complete sequence of Geobacter bemidjiensis BEM.</title>
        <authorList>
            <consortium name="US DOE Joint Genome Institute"/>
            <person name="Lucas S."/>
            <person name="Copeland A."/>
            <person name="Lapidus A."/>
            <person name="Glavina del Rio T."/>
            <person name="Dalin E."/>
            <person name="Tice H."/>
            <person name="Bruce D."/>
            <person name="Goodwin L."/>
            <person name="Pitluck S."/>
            <person name="Kiss H."/>
            <person name="Brettin T."/>
            <person name="Detter J.C."/>
            <person name="Han C."/>
            <person name="Kuske C.R."/>
            <person name="Schmutz J."/>
            <person name="Larimer F."/>
            <person name="Land M."/>
            <person name="Hauser L."/>
            <person name="Kyrpides N."/>
            <person name="Lykidis A."/>
            <person name="Lovley D."/>
            <person name="Richardson P."/>
        </authorList>
    </citation>
    <scope>NUCLEOTIDE SEQUENCE [LARGE SCALE GENOMIC DNA]</scope>
    <source>
        <strain>ATCC BAA-1014 / DSM 16622 / JCM 12645 / Bem</strain>
    </source>
</reference>
<proteinExistence type="inferred from homology"/>